<organism>
    <name type="scientific">Sparus aurata</name>
    <name type="common">Gilthead sea bream</name>
    <dbReference type="NCBI Taxonomy" id="8175"/>
    <lineage>
        <taxon>Eukaryota</taxon>
        <taxon>Metazoa</taxon>
        <taxon>Chordata</taxon>
        <taxon>Craniata</taxon>
        <taxon>Vertebrata</taxon>
        <taxon>Euteleostomi</taxon>
        <taxon>Actinopterygii</taxon>
        <taxon>Neopterygii</taxon>
        <taxon>Teleostei</taxon>
        <taxon>Neoteleostei</taxon>
        <taxon>Acanthomorphata</taxon>
        <taxon>Eupercaria</taxon>
        <taxon>Spariformes</taxon>
        <taxon>Sparidae</taxon>
        <taxon>Sparus</taxon>
    </lineage>
</organism>
<dbReference type="EC" id="4.1.2.13"/>
<dbReference type="EMBL" id="X82278">
    <property type="protein sequence ID" value="CAA57729.1"/>
    <property type="molecule type" value="mRNA"/>
</dbReference>
<dbReference type="PIR" id="S57270">
    <property type="entry name" value="S48810"/>
</dbReference>
<dbReference type="SMR" id="P53447"/>
<dbReference type="FunCoup" id="P53447">
    <property type="interactions" value="684"/>
</dbReference>
<dbReference type="InParanoid" id="P53447"/>
<dbReference type="UniPathway" id="UPA00109">
    <property type="reaction ID" value="UER00183"/>
</dbReference>
<dbReference type="Proteomes" id="UP000472265">
    <property type="component" value="Unplaced"/>
</dbReference>
<dbReference type="GO" id="GO:0034451">
    <property type="term" value="C:centriolar satellite"/>
    <property type="evidence" value="ECO:0007669"/>
    <property type="project" value="UniProtKB-SubCell"/>
</dbReference>
<dbReference type="GO" id="GO:0005737">
    <property type="term" value="C:cytoplasm"/>
    <property type="evidence" value="ECO:0007669"/>
    <property type="project" value="UniProtKB-KW"/>
</dbReference>
<dbReference type="GO" id="GO:0004332">
    <property type="term" value="F:fructose-bisphosphate aldolase activity"/>
    <property type="evidence" value="ECO:0007669"/>
    <property type="project" value="UniProtKB-EC"/>
</dbReference>
<dbReference type="GO" id="GO:0006096">
    <property type="term" value="P:glycolytic process"/>
    <property type="evidence" value="ECO:0007669"/>
    <property type="project" value="UniProtKB-UniPathway"/>
</dbReference>
<dbReference type="CDD" id="cd00948">
    <property type="entry name" value="FBP_aldolase_I_a"/>
    <property type="match status" value="1"/>
</dbReference>
<dbReference type="FunFam" id="3.20.20.70:FF:000021">
    <property type="entry name" value="Fructose-bisphosphate aldolase"/>
    <property type="match status" value="1"/>
</dbReference>
<dbReference type="Gene3D" id="3.20.20.70">
    <property type="entry name" value="Aldolase class I"/>
    <property type="match status" value="1"/>
</dbReference>
<dbReference type="InterPro" id="IPR029768">
    <property type="entry name" value="Aldolase_I_AS"/>
</dbReference>
<dbReference type="InterPro" id="IPR013785">
    <property type="entry name" value="Aldolase_TIM"/>
</dbReference>
<dbReference type="InterPro" id="IPR000741">
    <property type="entry name" value="FBA_I"/>
</dbReference>
<dbReference type="NCBIfam" id="NF033379">
    <property type="entry name" value="FrucBisAld_I"/>
    <property type="match status" value="1"/>
</dbReference>
<dbReference type="PANTHER" id="PTHR11627">
    <property type="entry name" value="FRUCTOSE-BISPHOSPHATE ALDOLASE"/>
    <property type="match status" value="1"/>
</dbReference>
<dbReference type="Pfam" id="PF00274">
    <property type="entry name" value="Glycolytic"/>
    <property type="match status" value="1"/>
</dbReference>
<dbReference type="SUPFAM" id="SSF51569">
    <property type="entry name" value="Aldolase"/>
    <property type="match status" value="1"/>
</dbReference>
<dbReference type="PROSITE" id="PS00158">
    <property type="entry name" value="ALDOLASE_CLASS_I"/>
    <property type="match status" value="1"/>
</dbReference>
<proteinExistence type="evidence at transcript level"/>
<feature type="initiator methionine" description="Removed" evidence="1">
    <location>
        <position position="1"/>
    </location>
</feature>
<feature type="chain" id="PRO_0000216946" description="Fructose-bisphosphate aldolase B">
    <location>
        <begin position="2"/>
        <end position="364"/>
    </location>
</feature>
<feature type="active site" description="Proton acceptor" evidence="1">
    <location>
        <position position="188"/>
    </location>
</feature>
<feature type="active site" description="Schiff-base intermediate with dihydroxyacetone-P" evidence="1">
    <location>
        <position position="230"/>
    </location>
</feature>
<feature type="binding site" evidence="1">
    <location>
        <position position="56"/>
    </location>
    <ligand>
        <name>substrate</name>
    </ligand>
</feature>
<feature type="binding site" evidence="1">
    <location>
        <position position="147"/>
    </location>
    <ligand>
        <name>substrate</name>
    </ligand>
</feature>
<feature type="site" description="Necessary for preference for fructose 1,6-bisphosphate over fructose 1-phosphate" evidence="1">
    <location>
        <position position="364"/>
    </location>
</feature>
<comment type="catalytic activity">
    <reaction>
        <text>beta-D-fructose 1,6-bisphosphate = D-glyceraldehyde 3-phosphate + dihydroxyacetone phosphate</text>
        <dbReference type="Rhea" id="RHEA:14729"/>
        <dbReference type="ChEBI" id="CHEBI:32966"/>
        <dbReference type="ChEBI" id="CHEBI:57642"/>
        <dbReference type="ChEBI" id="CHEBI:59776"/>
        <dbReference type="EC" id="4.1.2.13"/>
    </reaction>
</comment>
<comment type="pathway">
    <text>Carbohydrate degradation; glycolysis; D-glyceraldehyde 3-phosphate and glycerone phosphate from D-glucose: step 4/4.</text>
</comment>
<comment type="subunit">
    <text evidence="1">Homotetramer.</text>
</comment>
<comment type="subcellular location">
    <subcellularLocation>
        <location evidence="1">Cytoplasm</location>
        <location evidence="1">Cytoskeleton</location>
        <location evidence="1">Microtubule organizing center</location>
        <location evidence="1">Centrosome</location>
        <location evidence="1">Centriolar satellite</location>
    </subcellularLocation>
</comment>
<comment type="similarity">
    <text evidence="2">Belongs to the class I fructose-bisphosphate aldolase family.</text>
</comment>
<reference key="1">
    <citation type="journal article" date="1995" name="Biochim. Biophys. Acta">
        <title>Cloning and characterisation of a fish aldolase B gene.</title>
        <authorList>
            <person name="Llewellyn L."/>
            <person name="Ramsurn V.P."/>
            <person name="Sweeney G.E."/>
            <person name="Wigham T."/>
            <person name="Santos C.R."/>
            <person name="Power D.M."/>
        </authorList>
    </citation>
    <scope>NUCLEOTIDE SEQUENCE [MRNA]</scope>
    <source>
        <tissue>Liver</tissue>
    </source>
</reference>
<sequence length="364" mass="39645">MTHQFPSLSPEQKKELSDIAQRIVAPGKGILAADESTGTMGKRFQNINVENIEENRRCFRDILFSTDASIANCVGGIIFFHETLYQKSSNGKLFPQVVKEKGIVVGIKVDKGTAPLMGTDKETTTQGLDGLSERCAQYKKDGCDFAKWRCVLKISDGCPFALAIAENANVLARYASICQMNGLVPIVEPEILPDGDHDLQRCQYATEKVLAAVYKALSDHHVYLEGTLLKPNMVTPGHSCPKKFTPQEVAMATVTALRRTVPASVPGICFLSGGQSEEEASIHLNAINQVPLHRPWKLTFSYGRALQASALAAWQGKDANKAATQQVFVTRAKINGLASKGEYKPSGSADQASQQSLYTASYVY</sequence>
<protein>
    <recommendedName>
        <fullName>Fructose-bisphosphate aldolase B</fullName>
        <ecNumber>4.1.2.13</ecNumber>
    </recommendedName>
    <alternativeName>
        <fullName>Liver-type aldolase</fullName>
    </alternativeName>
</protein>
<accession>P53447</accession>
<keyword id="KW-0963">Cytoplasm</keyword>
<keyword id="KW-0206">Cytoskeleton</keyword>
<keyword id="KW-0324">Glycolysis</keyword>
<keyword id="KW-0456">Lyase</keyword>
<keyword id="KW-1185">Reference proteome</keyword>
<keyword id="KW-0704">Schiff base</keyword>
<evidence type="ECO:0000250" key="1"/>
<evidence type="ECO:0000305" key="2"/>
<name>ALDOB_SPAAU</name>
<gene>
    <name type="primary">aldob</name>
</gene>